<name>LGT_RHILO</name>
<protein>
    <recommendedName>
        <fullName evidence="1">Phosphatidylglycerol--prolipoprotein diacylglyceryl transferase</fullName>
        <ecNumber evidence="1">2.5.1.145</ecNumber>
    </recommendedName>
</protein>
<accession>Q98HW8</accession>
<feature type="chain" id="PRO_0000172658" description="Phosphatidylglycerol--prolipoprotein diacylglyceryl transferase">
    <location>
        <begin position="1"/>
        <end position="286"/>
    </location>
</feature>
<feature type="transmembrane region" description="Helical" evidence="1">
    <location>
        <begin position="24"/>
        <end position="44"/>
    </location>
</feature>
<feature type="transmembrane region" description="Helical" evidence="1">
    <location>
        <begin position="72"/>
        <end position="92"/>
    </location>
</feature>
<feature type="transmembrane region" description="Helical" evidence="1">
    <location>
        <begin position="104"/>
        <end position="124"/>
    </location>
</feature>
<feature type="transmembrane region" description="Helical" evidence="1">
    <location>
        <begin position="140"/>
        <end position="160"/>
    </location>
</feature>
<feature type="transmembrane region" description="Helical" evidence="1">
    <location>
        <begin position="190"/>
        <end position="210"/>
    </location>
</feature>
<feature type="transmembrane region" description="Helical" evidence="1">
    <location>
        <begin position="218"/>
        <end position="238"/>
    </location>
</feature>
<feature type="transmembrane region" description="Helical" evidence="1">
    <location>
        <begin position="253"/>
        <end position="273"/>
    </location>
</feature>
<feature type="binding site" evidence="1">
    <location>
        <position position="155"/>
    </location>
    <ligand>
        <name>a 1,2-diacyl-sn-glycero-3-phospho-(1'-sn-glycerol)</name>
        <dbReference type="ChEBI" id="CHEBI:64716"/>
    </ligand>
</feature>
<evidence type="ECO:0000255" key="1">
    <source>
        <dbReference type="HAMAP-Rule" id="MF_01147"/>
    </source>
</evidence>
<keyword id="KW-0997">Cell inner membrane</keyword>
<keyword id="KW-1003">Cell membrane</keyword>
<keyword id="KW-0472">Membrane</keyword>
<keyword id="KW-0808">Transferase</keyword>
<keyword id="KW-0812">Transmembrane</keyword>
<keyword id="KW-1133">Transmembrane helix</keyword>
<dbReference type="EC" id="2.5.1.145" evidence="1"/>
<dbReference type="EMBL" id="BA000012">
    <property type="protein sequence ID" value="BAB49748.1"/>
    <property type="molecule type" value="Genomic_DNA"/>
</dbReference>
<dbReference type="RefSeq" id="WP_010911097.1">
    <property type="nucleotide sequence ID" value="NC_002678.2"/>
</dbReference>
<dbReference type="SMR" id="Q98HW8"/>
<dbReference type="KEGG" id="mlo:mlr2678"/>
<dbReference type="eggNOG" id="COG0682">
    <property type="taxonomic scope" value="Bacteria"/>
</dbReference>
<dbReference type="HOGENOM" id="CLU_013386_1_0_5"/>
<dbReference type="UniPathway" id="UPA00664"/>
<dbReference type="Proteomes" id="UP000000552">
    <property type="component" value="Chromosome"/>
</dbReference>
<dbReference type="GO" id="GO:0005886">
    <property type="term" value="C:plasma membrane"/>
    <property type="evidence" value="ECO:0007669"/>
    <property type="project" value="UniProtKB-SubCell"/>
</dbReference>
<dbReference type="GO" id="GO:0008961">
    <property type="term" value="F:phosphatidylglycerol-prolipoprotein diacylglyceryl transferase activity"/>
    <property type="evidence" value="ECO:0007669"/>
    <property type="project" value="UniProtKB-UniRule"/>
</dbReference>
<dbReference type="GO" id="GO:0042158">
    <property type="term" value="P:lipoprotein biosynthetic process"/>
    <property type="evidence" value="ECO:0007669"/>
    <property type="project" value="UniProtKB-UniRule"/>
</dbReference>
<dbReference type="HAMAP" id="MF_01147">
    <property type="entry name" value="Lgt"/>
    <property type="match status" value="1"/>
</dbReference>
<dbReference type="InterPro" id="IPR001640">
    <property type="entry name" value="Lgt"/>
</dbReference>
<dbReference type="NCBIfam" id="TIGR00544">
    <property type="entry name" value="lgt"/>
    <property type="match status" value="1"/>
</dbReference>
<dbReference type="PANTHER" id="PTHR30589:SF0">
    <property type="entry name" value="PHOSPHATIDYLGLYCEROL--PROLIPOPROTEIN DIACYLGLYCERYL TRANSFERASE"/>
    <property type="match status" value="1"/>
</dbReference>
<dbReference type="PANTHER" id="PTHR30589">
    <property type="entry name" value="PROLIPOPROTEIN DIACYLGLYCERYL TRANSFERASE"/>
    <property type="match status" value="1"/>
</dbReference>
<dbReference type="Pfam" id="PF01790">
    <property type="entry name" value="LGT"/>
    <property type="match status" value="1"/>
</dbReference>
<proteinExistence type="inferred from homology"/>
<reference key="1">
    <citation type="journal article" date="2000" name="DNA Res.">
        <title>Complete genome structure of the nitrogen-fixing symbiotic bacterium Mesorhizobium loti.</title>
        <authorList>
            <person name="Kaneko T."/>
            <person name="Nakamura Y."/>
            <person name="Sato S."/>
            <person name="Asamizu E."/>
            <person name="Kato T."/>
            <person name="Sasamoto S."/>
            <person name="Watanabe A."/>
            <person name="Idesawa K."/>
            <person name="Ishikawa A."/>
            <person name="Kawashima K."/>
            <person name="Kimura T."/>
            <person name="Kishida Y."/>
            <person name="Kiyokawa C."/>
            <person name="Kohara M."/>
            <person name="Matsumoto M."/>
            <person name="Matsuno A."/>
            <person name="Mochizuki Y."/>
            <person name="Nakayama S."/>
            <person name="Nakazaki N."/>
            <person name="Shimpo S."/>
            <person name="Sugimoto M."/>
            <person name="Takeuchi C."/>
            <person name="Yamada M."/>
            <person name="Tabata S."/>
        </authorList>
    </citation>
    <scope>NUCLEOTIDE SEQUENCE [LARGE SCALE GENOMIC DNA]</scope>
    <source>
        <strain>LMG 29417 / CECT 9101 / MAFF 303099</strain>
    </source>
</reference>
<gene>
    <name evidence="1" type="primary">lgt</name>
    <name type="ordered locus">mlr2678</name>
</gene>
<organism>
    <name type="scientific">Mesorhizobium japonicum (strain LMG 29417 / CECT 9101 / MAFF 303099)</name>
    <name type="common">Mesorhizobium loti (strain MAFF 303099)</name>
    <dbReference type="NCBI Taxonomy" id="266835"/>
    <lineage>
        <taxon>Bacteria</taxon>
        <taxon>Pseudomonadati</taxon>
        <taxon>Pseudomonadota</taxon>
        <taxon>Alphaproteobacteria</taxon>
        <taxon>Hyphomicrobiales</taxon>
        <taxon>Phyllobacteriaceae</taxon>
        <taxon>Mesorhizobium</taxon>
    </lineage>
</organism>
<comment type="function">
    <text evidence="1">Catalyzes the transfer of the diacylglyceryl group from phosphatidylglycerol to the sulfhydryl group of the N-terminal cysteine of a prolipoprotein, the first step in the formation of mature lipoproteins.</text>
</comment>
<comment type="catalytic activity">
    <reaction evidence="1">
        <text>L-cysteinyl-[prolipoprotein] + a 1,2-diacyl-sn-glycero-3-phospho-(1'-sn-glycerol) = an S-1,2-diacyl-sn-glyceryl-L-cysteinyl-[prolipoprotein] + sn-glycerol 1-phosphate + H(+)</text>
        <dbReference type="Rhea" id="RHEA:56712"/>
        <dbReference type="Rhea" id="RHEA-COMP:14679"/>
        <dbReference type="Rhea" id="RHEA-COMP:14680"/>
        <dbReference type="ChEBI" id="CHEBI:15378"/>
        <dbReference type="ChEBI" id="CHEBI:29950"/>
        <dbReference type="ChEBI" id="CHEBI:57685"/>
        <dbReference type="ChEBI" id="CHEBI:64716"/>
        <dbReference type="ChEBI" id="CHEBI:140658"/>
        <dbReference type="EC" id="2.5.1.145"/>
    </reaction>
</comment>
<comment type="pathway">
    <text evidence="1">Protein modification; lipoprotein biosynthesis (diacylglyceryl transfer).</text>
</comment>
<comment type="subcellular location">
    <subcellularLocation>
        <location evidence="1">Cell inner membrane</location>
        <topology evidence="1">Multi-pass membrane protein</topology>
    </subcellularLocation>
</comment>
<comment type="similarity">
    <text evidence="1">Belongs to the Lgt family.</text>
</comment>
<sequence>MNEYFLLPLASLPFPNINPILIQIGPLAVHWYGVGYIVGILFAWWYAKRLAANPKLWPDGILPMKLEDLDDFIVWAAIGVVLGGRTGYVLFYDLPRYIAHPLDIFAVWQGGMSFHGGLLGVILAMTLFSIKRGIRTWSLFDVVAAGVPVGLGLVRVANFINSELWGRPTDVPWAIEFPNGGPFTRHPSQLYEALLEGLVLFVVLRILTHSRLKLKTPRFVGGAFICGYGLSRIFVEFFREPDQQLGYLLGTNWLTMGMILSTPMVLAGIWAMATAKPVKQAQPQAT</sequence>